<feature type="chain" id="PRO_0000322505" description="A-type ATP synthase subunit B 3">
    <location>
        <begin position="1"/>
        <end position="469"/>
    </location>
</feature>
<reference key="1">
    <citation type="journal article" date="2016" name="Stand. Genomic Sci.">
        <title>Complete genome sequence of Methanospirillum hungatei type strain JF1.</title>
        <authorList>
            <person name="Gunsalus R.P."/>
            <person name="Cook L.E."/>
            <person name="Crable B."/>
            <person name="Rohlin L."/>
            <person name="McDonald E."/>
            <person name="Mouttaki H."/>
            <person name="Sieber J.R."/>
            <person name="Poweleit N."/>
            <person name="Zhou H."/>
            <person name="Lapidus A.L."/>
            <person name="Daligault H.E."/>
            <person name="Land M."/>
            <person name="Gilna P."/>
            <person name="Ivanova N."/>
            <person name="Kyrpides N."/>
            <person name="Culley D.E."/>
            <person name="McInerney M.J."/>
        </authorList>
    </citation>
    <scope>NUCLEOTIDE SEQUENCE [LARGE SCALE GENOMIC DNA]</scope>
    <source>
        <strain>ATCC 27890 / DSM 864 / NBRC 100397 / JF-1</strain>
    </source>
</reference>
<accession>Q2FQF0</accession>
<protein>
    <recommendedName>
        <fullName evidence="1">A-type ATP synthase subunit B 3</fullName>
    </recommendedName>
</protein>
<dbReference type="EMBL" id="CP000254">
    <property type="protein sequence ID" value="ABD41490.1"/>
    <property type="molecule type" value="Genomic_DNA"/>
</dbReference>
<dbReference type="RefSeq" id="WP_011448754.1">
    <property type="nucleotide sequence ID" value="NC_007796.1"/>
</dbReference>
<dbReference type="SMR" id="Q2FQF0"/>
<dbReference type="STRING" id="323259.Mhun_1769"/>
<dbReference type="EnsemblBacteria" id="ABD41490">
    <property type="protein sequence ID" value="ABD41490"/>
    <property type="gene ID" value="Mhun_1769"/>
</dbReference>
<dbReference type="GeneID" id="3924743"/>
<dbReference type="KEGG" id="mhu:Mhun_1769"/>
<dbReference type="eggNOG" id="arCOG00865">
    <property type="taxonomic scope" value="Archaea"/>
</dbReference>
<dbReference type="HOGENOM" id="CLU_022916_0_0_2"/>
<dbReference type="InParanoid" id="Q2FQF0"/>
<dbReference type="OrthoDB" id="32941at2157"/>
<dbReference type="Proteomes" id="UP000001941">
    <property type="component" value="Chromosome"/>
</dbReference>
<dbReference type="GO" id="GO:0005886">
    <property type="term" value="C:plasma membrane"/>
    <property type="evidence" value="ECO:0007669"/>
    <property type="project" value="UniProtKB-SubCell"/>
</dbReference>
<dbReference type="GO" id="GO:0005524">
    <property type="term" value="F:ATP binding"/>
    <property type="evidence" value="ECO:0007669"/>
    <property type="project" value="UniProtKB-UniRule"/>
</dbReference>
<dbReference type="GO" id="GO:0046933">
    <property type="term" value="F:proton-transporting ATP synthase activity, rotational mechanism"/>
    <property type="evidence" value="ECO:0007669"/>
    <property type="project" value="UniProtKB-UniRule"/>
</dbReference>
<dbReference type="GO" id="GO:0042777">
    <property type="term" value="P:proton motive force-driven plasma membrane ATP synthesis"/>
    <property type="evidence" value="ECO:0007669"/>
    <property type="project" value="UniProtKB-UniRule"/>
</dbReference>
<dbReference type="CDD" id="cd18112">
    <property type="entry name" value="ATP-synt_V_A-type_beta_C"/>
    <property type="match status" value="1"/>
</dbReference>
<dbReference type="CDD" id="cd18118">
    <property type="entry name" value="ATP-synt_V_A-type_beta_N"/>
    <property type="match status" value="1"/>
</dbReference>
<dbReference type="CDD" id="cd01135">
    <property type="entry name" value="V_A-ATPase_B"/>
    <property type="match status" value="1"/>
</dbReference>
<dbReference type="Gene3D" id="3.40.50.12240">
    <property type="match status" value="1"/>
</dbReference>
<dbReference type="HAMAP" id="MF_00310">
    <property type="entry name" value="ATP_synth_B_arch"/>
    <property type="match status" value="1"/>
</dbReference>
<dbReference type="InterPro" id="IPR055190">
    <property type="entry name" value="ATP-synt_VA_C"/>
</dbReference>
<dbReference type="InterPro" id="IPR004100">
    <property type="entry name" value="ATPase_F1/V1/A1_a/bsu_N"/>
</dbReference>
<dbReference type="InterPro" id="IPR000194">
    <property type="entry name" value="ATPase_F1/V1/A1_a/bsu_nucl-bd"/>
</dbReference>
<dbReference type="InterPro" id="IPR027417">
    <property type="entry name" value="P-loop_NTPase"/>
</dbReference>
<dbReference type="InterPro" id="IPR022879">
    <property type="entry name" value="V-ATPase_su_B/beta"/>
</dbReference>
<dbReference type="NCBIfam" id="NF003235">
    <property type="entry name" value="PRK04196.1"/>
    <property type="match status" value="1"/>
</dbReference>
<dbReference type="PANTHER" id="PTHR43389">
    <property type="entry name" value="V-TYPE PROTON ATPASE SUBUNIT B"/>
    <property type="match status" value="1"/>
</dbReference>
<dbReference type="PANTHER" id="PTHR43389:SF4">
    <property type="entry name" value="V-TYPE PROTON ATPASE SUBUNIT B"/>
    <property type="match status" value="1"/>
</dbReference>
<dbReference type="Pfam" id="PF00006">
    <property type="entry name" value="ATP-synt_ab"/>
    <property type="match status" value="1"/>
</dbReference>
<dbReference type="Pfam" id="PF02874">
    <property type="entry name" value="ATP-synt_ab_N"/>
    <property type="match status" value="1"/>
</dbReference>
<dbReference type="Pfam" id="PF22919">
    <property type="entry name" value="ATP-synt_VA_C"/>
    <property type="match status" value="1"/>
</dbReference>
<dbReference type="PIRSF" id="PIRSF039114">
    <property type="entry name" value="V-ATPsynth_beta/V-ATPase_B"/>
    <property type="match status" value="1"/>
</dbReference>
<dbReference type="SUPFAM" id="SSF52540">
    <property type="entry name" value="P-loop containing nucleoside triphosphate hydrolases"/>
    <property type="match status" value="1"/>
</dbReference>
<keyword id="KW-0066">ATP synthesis</keyword>
<keyword id="KW-1003">Cell membrane</keyword>
<keyword id="KW-0375">Hydrogen ion transport</keyword>
<keyword id="KW-0406">Ion transport</keyword>
<keyword id="KW-0472">Membrane</keyword>
<keyword id="KW-1185">Reference proteome</keyword>
<keyword id="KW-0813">Transport</keyword>
<comment type="function">
    <text evidence="1">Component of the A-type ATP synthase that produces ATP from ADP in the presence of a proton gradient across the membrane. The B chain is a regulatory subunit.</text>
</comment>
<comment type="subunit">
    <text evidence="1">Has multiple subunits with at least A(3), B(3), C, D, E, F, H, I and proteolipid K(x).</text>
</comment>
<comment type="subcellular location">
    <subcellularLocation>
        <location evidence="1">Cell membrane</location>
        <topology evidence="1">Peripheral membrane protein</topology>
    </subcellularLocation>
</comment>
<comment type="similarity">
    <text evidence="1">Belongs to the ATPase alpha/beta chains family.</text>
</comment>
<proteinExistence type="inferred from homology"/>
<organism>
    <name type="scientific">Methanospirillum hungatei JF-1 (strain ATCC 27890 / DSM 864 / NBRC 100397 / JF-1)</name>
    <dbReference type="NCBI Taxonomy" id="323259"/>
    <lineage>
        <taxon>Archaea</taxon>
        <taxon>Methanobacteriati</taxon>
        <taxon>Methanobacteriota</taxon>
        <taxon>Stenosarchaea group</taxon>
        <taxon>Methanomicrobia</taxon>
        <taxon>Methanomicrobiales</taxon>
        <taxon>Methanospirillaceae</taxon>
        <taxon>Methanospirillum</taxon>
    </lineage>
</organism>
<evidence type="ECO:0000255" key="1">
    <source>
        <dbReference type="HAMAP-Rule" id="MF_00310"/>
    </source>
</evidence>
<gene>
    <name evidence="1" type="primary">atpB3</name>
    <name type="ordered locus">Mhun_1769</name>
</gene>
<name>AATB3_METHJ</name>
<sequence>MTDLRFRTYTGVSKVVGPLMVLDGVEGIGYGEIAEITLPGGEVRIGQVLETTTTRAMVQVFRGTRDLDTEKTQVRFRGEPMKISLSSDMLGRTFDGSARPIDGGGPVIPECIRDIYGSPINPSAREHPRDSIQTGISSIDGMNTLVRGQKLPIFSGAGLPHNLLASQIARQAKVTGQAEKFAVVFAAMGITYEESAFFIREFEESGALERTVLFLNLADDPAIERIITPRLALTTAEYLAFDKGMHVLVVLTDLTNYCEALREIAAAREEVPGRRGYPGYIYTDLASLYERAGRIRGREGSITQIPILTMPDDDITHPVPDLTGYITEGQIVLSRDLHRKGIYPPVDVLPCLSRLMQGGIGPGRTRADHAEVKNQLYSAYARGIRLKSLVAVMGEEGLTPLDKLYIRFCDRFENDFIRQASYEDRSFDDTLTLAWDLLSILPKAELKRISTEFIKMYYHGEEILECKGP</sequence>